<name>BCD2_SYNWW</name>
<keyword id="KW-0963">Cytoplasm</keyword>
<keyword id="KW-0274">FAD</keyword>
<keyword id="KW-0276">Fatty acid metabolism</keyword>
<keyword id="KW-0285">Flavoprotein</keyword>
<keyword id="KW-0443">Lipid metabolism</keyword>
<keyword id="KW-0560">Oxidoreductase</keyword>
<keyword id="KW-1185">Reference proteome</keyword>
<comment type="function">
    <text evidence="3 9">Involved in syntrophic growth of S.wolfei with butyrate, as part of the butyrate oxidation pathway. Catalyzes the oxidation of butanoyl-CoA to crotonyl-CoA. Probably passes the electrons released by this reaction on to electron-transfer flavoproteins (EtfAB) to finally generate hydrogen and/or formate.</text>
</comment>
<comment type="catalytic activity">
    <reaction evidence="3">
        <text>butanoyl-CoA + oxidized [electron-transfer flavoprotein] + H(+) = (2E)-butenoyl-CoA + reduced [electron-transfer flavoprotein]</text>
        <dbReference type="Rhea" id="RHEA:24004"/>
        <dbReference type="Rhea" id="RHEA-COMP:10685"/>
        <dbReference type="Rhea" id="RHEA-COMP:10686"/>
        <dbReference type="ChEBI" id="CHEBI:15378"/>
        <dbReference type="ChEBI" id="CHEBI:57332"/>
        <dbReference type="ChEBI" id="CHEBI:57371"/>
        <dbReference type="ChEBI" id="CHEBI:57692"/>
        <dbReference type="ChEBI" id="CHEBI:58307"/>
        <dbReference type="EC" id="1.3.8.1"/>
    </reaction>
</comment>
<comment type="catalytic activity">
    <reaction evidence="3">
        <text>a short-chain 2,3-saturated fatty acyl-CoA + oxidized [electron-transfer flavoprotein] + H(+) = a short-chain (2E)-enoyl-CoA + reduced [electron-transfer flavoprotein]</text>
        <dbReference type="Rhea" id="RHEA:47196"/>
        <dbReference type="Rhea" id="RHEA-COMP:10685"/>
        <dbReference type="Rhea" id="RHEA-COMP:10686"/>
        <dbReference type="ChEBI" id="CHEBI:15378"/>
        <dbReference type="ChEBI" id="CHEBI:57692"/>
        <dbReference type="ChEBI" id="CHEBI:58307"/>
        <dbReference type="ChEBI" id="CHEBI:87487"/>
        <dbReference type="ChEBI" id="CHEBI:87488"/>
        <dbReference type="EC" id="1.3.8.1"/>
    </reaction>
</comment>
<comment type="cofactor">
    <cofactor evidence="2 8">
        <name>FAD</name>
        <dbReference type="ChEBI" id="CHEBI:57692"/>
    </cofactor>
</comment>
<comment type="pathway">
    <text evidence="8 9">Lipid metabolism; butanoate metabolism.</text>
</comment>
<comment type="subcellular location">
    <subcellularLocation>
        <location evidence="4">Cytoplasm</location>
    </subcellularLocation>
</comment>
<comment type="induction">
    <text evidence="3 4">Expressed during syntrophic growth with butyrate (at protein level) (PubMed:19648244, PubMed:23468890). Seems to be constitutively expressed (PubMed:23468890).</text>
</comment>
<comment type="similarity">
    <text evidence="7">Belongs to the acyl-CoA dehydrogenase family.</text>
</comment>
<accession>Q0AVA8</accession>
<evidence type="ECO:0000250" key="1">
    <source>
        <dbReference type="UniProtKB" id="Q06319"/>
    </source>
</evidence>
<evidence type="ECO:0000250" key="2">
    <source>
        <dbReference type="UniProtKB" id="Q2LQP0"/>
    </source>
</evidence>
<evidence type="ECO:0000269" key="3">
    <source>
    </source>
</evidence>
<evidence type="ECO:0000269" key="4">
    <source>
    </source>
</evidence>
<evidence type="ECO:0000303" key="5">
    <source>
    </source>
</evidence>
<evidence type="ECO:0000303" key="6">
    <source>
    </source>
</evidence>
<evidence type="ECO:0000305" key="7"/>
<evidence type="ECO:0000305" key="8">
    <source>
    </source>
</evidence>
<evidence type="ECO:0000305" key="9">
    <source>
    </source>
</evidence>
<evidence type="ECO:0000312" key="10">
    <source>
        <dbReference type="EMBL" id="ABI69346.1"/>
    </source>
</evidence>
<dbReference type="EC" id="1.3.8.1" evidence="3"/>
<dbReference type="EMBL" id="CP000448">
    <property type="protein sequence ID" value="ABI69346.1"/>
    <property type="molecule type" value="Genomic_DNA"/>
</dbReference>
<dbReference type="RefSeq" id="WP_011641438.1">
    <property type="nucleotide sequence ID" value="NC_008346.1"/>
</dbReference>
<dbReference type="SMR" id="Q0AVA8"/>
<dbReference type="STRING" id="335541.Swol_2052"/>
<dbReference type="KEGG" id="swo:Swol_2052"/>
<dbReference type="eggNOG" id="COG1960">
    <property type="taxonomic scope" value="Bacteria"/>
</dbReference>
<dbReference type="HOGENOM" id="CLU_018204_12_2_9"/>
<dbReference type="OrthoDB" id="9802447at2"/>
<dbReference type="UniPathway" id="UPA00863"/>
<dbReference type="Proteomes" id="UP000001968">
    <property type="component" value="Chromosome"/>
</dbReference>
<dbReference type="GO" id="GO:0005737">
    <property type="term" value="C:cytoplasm"/>
    <property type="evidence" value="ECO:0007669"/>
    <property type="project" value="UniProtKB-SubCell"/>
</dbReference>
<dbReference type="GO" id="GO:0016937">
    <property type="term" value="F:short-chain fatty acyl-CoA dehydrogenase activity"/>
    <property type="evidence" value="ECO:0007669"/>
    <property type="project" value="UniProtKB-EC"/>
</dbReference>
<dbReference type="GO" id="GO:0019605">
    <property type="term" value="P:butyrate metabolic process"/>
    <property type="evidence" value="ECO:0007669"/>
    <property type="project" value="UniProtKB-UniPathway"/>
</dbReference>
<dbReference type="Gene3D" id="2.40.110.20">
    <property type="match status" value="1"/>
</dbReference>
<dbReference type="Gene3D" id="1.20.140.10">
    <property type="entry name" value="Butyryl-CoA Dehydrogenase, subunit A, domain 3"/>
    <property type="match status" value="1"/>
</dbReference>
<dbReference type="InterPro" id="IPR025878">
    <property type="entry name" value="Acyl-CoA_dh-like_C_dom"/>
</dbReference>
<dbReference type="InterPro" id="IPR006091">
    <property type="entry name" value="Acyl-CoA_Oxase/DH_mid-dom"/>
</dbReference>
<dbReference type="InterPro" id="IPR036250">
    <property type="entry name" value="AcylCo_DH-like_C"/>
</dbReference>
<dbReference type="InterPro" id="IPR009075">
    <property type="entry name" value="AcylCo_DH/oxidase_C"/>
</dbReference>
<dbReference type="InterPro" id="IPR009100">
    <property type="entry name" value="AcylCoA_DH/oxidase_NM_dom_sf"/>
</dbReference>
<dbReference type="InterPro" id="IPR052166">
    <property type="entry name" value="Diverse_Acyl-CoA_DH"/>
</dbReference>
<dbReference type="PANTHER" id="PTHR42803">
    <property type="entry name" value="ACYL-COA DEHYDROGENASE"/>
    <property type="match status" value="1"/>
</dbReference>
<dbReference type="PANTHER" id="PTHR42803:SF1">
    <property type="entry name" value="BROAD-SPECIFICITY LINEAR ACYL-COA DEHYDROGENASE FADE5"/>
    <property type="match status" value="1"/>
</dbReference>
<dbReference type="Pfam" id="PF00441">
    <property type="entry name" value="Acyl-CoA_dh_1"/>
    <property type="match status" value="1"/>
</dbReference>
<dbReference type="Pfam" id="PF12806">
    <property type="entry name" value="Acyl-CoA_dh_C"/>
    <property type="match status" value="1"/>
</dbReference>
<dbReference type="Pfam" id="PF02770">
    <property type="entry name" value="Acyl-CoA_dh_M"/>
    <property type="match status" value="1"/>
</dbReference>
<dbReference type="SUPFAM" id="SSF47203">
    <property type="entry name" value="Acyl-CoA dehydrogenase C-terminal domain-like"/>
    <property type="match status" value="1"/>
</dbReference>
<dbReference type="SUPFAM" id="SSF56645">
    <property type="entry name" value="Acyl-CoA dehydrogenase NM domain-like"/>
    <property type="match status" value="1"/>
</dbReference>
<proteinExistence type="evidence at protein level"/>
<protein>
    <recommendedName>
        <fullName evidence="5 6">Butyryl-CoA dehydrogenase Swol_2052</fullName>
        <shortName evidence="5 6">BCD</shortName>
        <ecNumber evidence="3">1.3.8.1</ecNumber>
    </recommendedName>
</protein>
<sequence>MPHNNYLYQTRDIKFQIKEWLDINKILSLDAYKDYYGADDFDAICDVNFKICRDVICPANKESDEIGMKHVGGNEKAVISPDVFKTVYNTVIEAGMGPQFGDRQVEGRMPLYWYAPILEMQTGASPAMVMLWCLTQGATTVLQYNLSKELQERFLPKMYSGEWGGSMCLTEPGAGSEVGAVSTKCFPTDTPGLWKVKGQKCFITTGDWDGVDNIIHLVLAKDPDAKPGTAGISCLVVPKFWVNEDGSMGAWNDVTTTGIEHKLGIHGSATCSLAFGENDNCYGWMIGDGPVDGRGQGMAQMFQMMNEERINTGIFSLGAFGAAYYAALEYSKARVQSKKSTDPKGPSVRIIEHEDVRRMLLLQKSVMEACRALLYSSYYYIDMSKEAATEEEREYAEDMFMIQNPLCKAYVSDMAWVMCAEAIQVHGGYGFMEEYAPASLARDCKIYTLWEGTNFIQSQDFTGRKFTMKKGEPFKKWLAEIGDFIANKKTPEFAAEFAMMEKAFAAFNSIIDMNAAWTTTNKQLKQLFATRIMHAAARVICGKLMLDQGLLAAGKLAELGDSHFDANFYKGKLASVKFYVMNVVPEIFGTEEAMKAADTSAIDCPEEAIM</sequence>
<organism>
    <name type="scientific">Syntrophomonas wolfei subsp. wolfei (strain DSM 2245B / Goettingen)</name>
    <dbReference type="NCBI Taxonomy" id="335541"/>
    <lineage>
        <taxon>Bacteria</taxon>
        <taxon>Bacillati</taxon>
        <taxon>Bacillota</taxon>
        <taxon>Clostridia</taxon>
        <taxon>Eubacteriales</taxon>
        <taxon>Syntrophomonadaceae</taxon>
        <taxon>Syntrophomonas</taxon>
    </lineage>
</organism>
<gene>
    <name evidence="10" type="ordered locus">Swol_2052</name>
</gene>
<reference key="1">
    <citation type="journal article" date="2010" name="Environ. Microbiol.">
        <title>The genome of Syntrophomonas wolfei: new insights into syntrophic metabolism and biohydrogen production.</title>
        <authorList>
            <person name="Sieber J.R."/>
            <person name="Sims D.R."/>
            <person name="Han C."/>
            <person name="Kim E."/>
            <person name="Lykidis A."/>
            <person name="Lapidus A.L."/>
            <person name="McDonnald E."/>
            <person name="Rohlin L."/>
            <person name="Culley D.E."/>
            <person name="Gunsalus R."/>
            <person name="McInerney M.J."/>
        </authorList>
    </citation>
    <scope>NUCLEOTIDE SEQUENCE [LARGE SCALE GENOMIC DNA]</scope>
    <source>
        <strain>DSM 2245B / Goettingen</strain>
    </source>
</reference>
<reference key="2">
    <citation type="journal article" date="2009" name="J. Bacteriol.">
        <title>Involvement of NADH:acceptor oxidoreductase and butyryl coenzyme A dehydrogenase in reversed electron transport during syntrophic butyrate oxidation by Syntrophomonas wolfei.</title>
        <authorList>
            <person name="Mueller N."/>
            <person name="Schleheck D."/>
            <person name="Schink B."/>
        </authorList>
    </citation>
    <scope>IDENTIFICATION BY MASS SPECTROMETRY</scope>
    <scope>FUNCTION</scope>
    <scope>CATALYTIC ACTIVITY</scope>
    <scope>COFACTOR</scope>
    <scope>INDUCTION</scope>
    <scope>PATHWAY</scope>
</reference>
<reference key="3">
    <citation type="journal article" date="2013" name="PLoS ONE">
        <title>A proteomic view at the biochemistry of syntrophic butyrate oxidation in Syntrophomonas wolfei.</title>
        <authorList>
            <person name="Schmidt A."/>
            <person name="Mueller N."/>
            <person name="Schink B."/>
            <person name="Schleheck D."/>
        </authorList>
    </citation>
    <scope>IDENTIFICATION BY MASS SPECTROMETRY</scope>
    <scope>INDUCTION</scope>
    <scope>SUBCELLULAR LOCATION</scope>
    <scope>FUNCTION</scope>
    <scope>PATHWAY</scope>
</reference>
<feature type="chain" id="PRO_0000442212" description="Butyryl-CoA dehydrogenase Swol_2052">
    <location>
        <begin position="1"/>
        <end position="610"/>
    </location>
</feature>
<feature type="active site" description="Proton acceptor" evidence="1">
    <location>
        <position position="451"/>
    </location>
</feature>